<proteinExistence type="inferred from homology"/>
<comment type="function">
    <text evidence="1">This protein is one of the early assembly proteins of the 50S ribosomal subunit, although it is not seen to bind rRNA by itself. It is important during the early stages of 50S assembly.</text>
</comment>
<comment type="subunit">
    <text evidence="1">Part of the 50S ribosomal subunit.</text>
</comment>
<comment type="similarity">
    <text evidence="1">Belongs to the universal ribosomal protein uL13 family.</text>
</comment>
<feature type="chain" id="PRO_1000055467" description="Large ribosomal subunit protein uL13">
    <location>
        <begin position="1"/>
        <end position="142"/>
    </location>
</feature>
<keyword id="KW-1185">Reference proteome</keyword>
<keyword id="KW-0687">Ribonucleoprotein</keyword>
<keyword id="KW-0689">Ribosomal protein</keyword>
<name>RL13_SHEB5</name>
<evidence type="ECO:0000255" key="1">
    <source>
        <dbReference type="HAMAP-Rule" id="MF_01366"/>
    </source>
</evidence>
<evidence type="ECO:0000305" key="2"/>
<organism>
    <name type="scientific">Shewanella baltica (strain OS155 / ATCC BAA-1091)</name>
    <dbReference type="NCBI Taxonomy" id="325240"/>
    <lineage>
        <taxon>Bacteria</taxon>
        <taxon>Pseudomonadati</taxon>
        <taxon>Pseudomonadota</taxon>
        <taxon>Gammaproteobacteria</taxon>
        <taxon>Alteromonadales</taxon>
        <taxon>Shewanellaceae</taxon>
        <taxon>Shewanella</taxon>
    </lineage>
</organism>
<accession>A3D8R4</accession>
<dbReference type="EMBL" id="CP000563">
    <property type="protein sequence ID" value="ABN63127.1"/>
    <property type="molecule type" value="Genomic_DNA"/>
</dbReference>
<dbReference type="RefSeq" id="WP_006083053.1">
    <property type="nucleotide sequence ID" value="NC_009052.1"/>
</dbReference>
<dbReference type="SMR" id="A3D8R4"/>
<dbReference type="STRING" id="325240.Sbal_3652"/>
<dbReference type="GeneID" id="11771044"/>
<dbReference type="KEGG" id="sbl:Sbal_3652"/>
<dbReference type="HOGENOM" id="CLU_082184_2_2_6"/>
<dbReference type="OrthoDB" id="9801330at2"/>
<dbReference type="Proteomes" id="UP000001557">
    <property type="component" value="Chromosome"/>
</dbReference>
<dbReference type="GO" id="GO:0022625">
    <property type="term" value="C:cytosolic large ribosomal subunit"/>
    <property type="evidence" value="ECO:0007669"/>
    <property type="project" value="TreeGrafter"/>
</dbReference>
<dbReference type="GO" id="GO:0003729">
    <property type="term" value="F:mRNA binding"/>
    <property type="evidence" value="ECO:0007669"/>
    <property type="project" value="TreeGrafter"/>
</dbReference>
<dbReference type="GO" id="GO:0003735">
    <property type="term" value="F:structural constituent of ribosome"/>
    <property type="evidence" value="ECO:0007669"/>
    <property type="project" value="InterPro"/>
</dbReference>
<dbReference type="GO" id="GO:0017148">
    <property type="term" value="P:negative regulation of translation"/>
    <property type="evidence" value="ECO:0007669"/>
    <property type="project" value="TreeGrafter"/>
</dbReference>
<dbReference type="GO" id="GO:0006412">
    <property type="term" value="P:translation"/>
    <property type="evidence" value="ECO:0007669"/>
    <property type="project" value="UniProtKB-UniRule"/>
</dbReference>
<dbReference type="CDD" id="cd00392">
    <property type="entry name" value="Ribosomal_L13"/>
    <property type="match status" value="1"/>
</dbReference>
<dbReference type="FunFam" id="3.90.1180.10:FF:000001">
    <property type="entry name" value="50S ribosomal protein L13"/>
    <property type="match status" value="1"/>
</dbReference>
<dbReference type="Gene3D" id="3.90.1180.10">
    <property type="entry name" value="Ribosomal protein L13"/>
    <property type="match status" value="1"/>
</dbReference>
<dbReference type="HAMAP" id="MF_01366">
    <property type="entry name" value="Ribosomal_uL13"/>
    <property type="match status" value="1"/>
</dbReference>
<dbReference type="InterPro" id="IPR005822">
    <property type="entry name" value="Ribosomal_uL13"/>
</dbReference>
<dbReference type="InterPro" id="IPR005823">
    <property type="entry name" value="Ribosomal_uL13_bac-type"/>
</dbReference>
<dbReference type="InterPro" id="IPR023563">
    <property type="entry name" value="Ribosomal_uL13_CS"/>
</dbReference>
<dbReference type="InterPro" id="IPR036899">
    <property type="entry name" value="Ribosomal_uL13_sf"/>
</dbReference>
<dbReference type="NCBIfam" id="TIGR01066">
    <property type="entry name" value="rplM_bact"/>
    <property type="match status" value="1"/>
</dbReference>
<dbReference type="PANTHER" id="PTHR11545:SF2">
    <property type="entry name" value="LARGE RIBOSOMAL SUBUNIT PROTEIN UL13M"/>
    <property type="match status" value="1"/>
</dbReference>
<dbReference type="PANTHER" id="PTHR11545">
    <property type="entry name" value="RIBOSOMAL PROTEIN L13"/>
    <property type="match status" value="1"/>
</dbReference>
<dbReference type="Pfam" id="PF00572">
    <property type="entry name" value="Ribosomal_L13"/>
    <property type="match status" value="1"/>
</dbReference>
<dbReference type="PIRSF" id="PIRSF002181">
    <property type="entry name" value="Ribosomal_L13"/>
    <property type="match status" value="1"/>
</dbReference>
<dbReference type="SUPFAM" id="SSF52161">
    <property type="entry name" value="Ribosomal protein L13"/>
    <property type="match status" value="1"/>
</dbReference>
<dbReference type="PROSITE" id="PS00783">
    <property type="entry name" value="RIBOSOMAL_L13"/>
    <property type="match status" value="1"/>
</dbReference>
<sequence>MKTFTATPETVTRDWFVVDADGKTLGRIATEIATRLRGKHKPEYTPHVDTGDYIIVVNAEKVTVTGNKAKGKTYYSHSGFPGGIKQISFEKLQAQKPEMIIEKAVKGMLPKGPLGRAMFRKLKVYAGAEHNHTAQQPQVLDI</sequence>
<protein>
    <recommendedName>
        <fullName evidence="1">Large ribosomal subunit protein uL13</fullName>
    </recommendedName>
    <alternativeName>
        <fullName evidence="2">50S ribosomal protein L13</fullName>
    </alternativeName>
</protein>
<gene>
    <name evidence="1" type="primary">rplM</name>
    <name type="ordered locus">Sbal_3652</name>
</gene>
<reference key="1">
    <citation type="submission" date="2007-02" db="EMBL/GenBank/DDBJ databases">
        <title>Complete sequence of chromosome of Shewanella baltica OS155.</title>
        <authorList>
            <consortium name="US DOE Joint Genome Institute"/>
            <person name="Copeland A."/>
            <person name="Lucas S."/>
            <person name="Lapidus A."/>
            <person name="Barry K."/>
            <person name="Detter J.C."/>
            <person name="Glavina del Rio T."/>
            <person name="Hammon N."/>
            <person name="Israni S."/>
            <person name="Dalin E."/>
            <person name="Tice H."/>
            <person name="Pitluck S."/>
            <person name="Sims D.R."/>
            <person name="Brettin T."/>
            <person name="Bruce D."/>
            <person name="Han C."/>
            <person name="Tapia R."/>
            <person name="Brainard J."/>
            <person name="Schmutz J."/>
            <person name="Larimer F."/>
            <person name="Land M."/>
            <person name="Hauser L."/>
            <person name="Kyrpides N."/>
            <person name="Mikhailova N."/>
            <person name="Brettar I."/>
            <person name="Klappenbach J."/>
            <person name="Konstantinidis K."/>
            <person name="Rodrigues J."/>
            <person name="Tiedje J."/>
            <person name="Richardson P."/>
        </authorList>
    </citation>
    <scope>NUCLEOTIDE SEQUENCE [LARGE SCALE GENOMIC DNA]</scope>
    <source>
        <strain>OS155 / ATCC BAA-1091</strain>
    </source>
</reference>